<dbReference type="EMBL" id="AH001325">
    <property type="protein sequence ID" value="AAA32432.1"/>
    <property type="molecule type" value="Genomic_DNA"/>
</dbReference>
<dbReference type="EMBL" id="X51522">
    <property type="protein sequence ID" value="CAA35906.1"/>
    <property type="molecule type" value="Genomic_DNA"/>
</dbReference>
<dbReference type="EMBL" id="X02534">
    <property type="protein sequence ID" value="CAA26374.1"/>
    <property type="molecule type" value="Genomic_DNA"/>
</dbReference>
<dbReference type="EMBL" id="M29479">
    <property type="protein sequence ID" value="AAA32435.1"/>
    <property type="molecule type" value="Genomic_DNA"/>
</dbReference>
<dbReference type="PIR" id="S06887">
    <property type="entry name" value="PUBPP4"/>
</dbReference>
<dbReference type="RefSeq" id="NP_042044.1">
    <property type="nucleotide sequence ID" value="NC_001609.1"/>
</dbReference>
<dbReference type="PDB" id="3RX6">
    <property type="method" value="X-ray"/>
    <property type="resolution" value="2.04 A"/>
    <property type="chains" value="A=1-190"/>
</dbReference>
<dbReference type="PDB" id="4DVD">
    <property type="method" value="X-ray"/>
    <property type="resolution" value="3.00 A"/>
    <property type="chains" value="A=1-190"/>
</dbReference>
<dbReference type="PDB" id="8PEU">
    <property type="method" value="EM"/>
    <property type="resolution" value="3.70 A"/>
    <property type="chains" value="a/b/c/d/e/f/g/h/i/j/k/l=1-190"/>
</dbReference>
<dbReference type="PDB" id="8PEW">
    <property type="method" value="EM"/>
    <property type="resolution" value="4.30 A"/>
    <property type="chains" value="a/b/c/d/e/f/g/h/i/j/k/l/m/n/o/p=1-190"/>
</dbReference>
<dbReference type="PDB" id="8PEX">
    <property type="method" value="EM"/>
    <property type="resolution" value="3.10 A"/>
    <property type="chains" value="a/b/c/d/e/f/g/h/i/j=1-190"/>
</dbReference>
<dbReference type="PDB" id="8PEY">
    <property type="method" value="EM"/>
    <property type="resolution" value="3.00 A"/>
    <property type="chains" value="a/b/c/d/e/f/g/h/i/j=1-190"/>
</dbReference>
<dbReference type="PDB" id="9GCS">
    <property type="method" value="EM"/>
    <property type="resolution" value="3.90 A"/>
    <property type="chains" value="c/d/e/f/g/h/i/j/k/l=1-190"/>
</dbReference>
<dbReference type="PDB" id="9GCT">
    <property type="method" value="EM"/>
    <property type="resolution" value="3.70 A"/>
    <property type="chains" value="a/b/c/d/e/f/g/h/i/j/k/l/o/p=1-190"/>
</dbReference>
<dbReference type="PDBsum" id="3RX6"/>
<dbReference type="PDBsum" id="4DVD"/>
<dbReference type="PDBsum" id="8PEU"/>
<dbReference type="PDBsum" id="8PEW"/>
<dbReference type="PDBsum" id="8PEX"/>
<dbReference type="PDBsum" id="8PEY"/>
<dbReference type="PDBsum" id="9GCS"/>
<dbReference type="PDBsum" id="9GCT"/>
<dbReference type="EMDB" id="EMD-17637"/>
<dbReference type="EMDB" id="EMD-17639"/>
<dbReference type="EMDB" id="EMD-17640"/>
<dbReference type="EMDB" id="EMD-17641"/>
<dbReference type="EMDB" id="EMD-51235"/>
<dbReference type="EMDB" id="EMD-51236"/>
<dbReference type="SMR" id="P05460"/>
<dbReference type="KEGG" id="vg:1261094"/>
<dbReference type="EvolutionaryTrace" id="P05460"/>
<dbReference type="Proteomes" id="UP000009093">
    <property type="component" value="Genome"/>
</dbReference>
<dbReference type="GO" id="GO:1990216">
    <property type="term" value="P:symbiont-mediated activation of host transcription"/>
    <property type="evidence" value="ECO:0000314"/>
    <property type="project" value="CACAO"/>
</dbReference>
<dbReference type="Gene3D" id="1.20.58.1090">
    <property type="entry name" value="Phage polarity suppression protein monomer"/>
    <property type="match status" value="1"/>
</dbReference>
<dbReference type="InterPro" id="IPR010006">
    <property type="entry name" value="Phage_P4_Psu"/>
</dbReference>
<dbReference type="Pfam" id="PF07455">
    <property type="entry name" value="Psu"/>
    <property type="match status" value="1"/>
</dbReference>
<feature type="chain" id="PRO_0000165227" description="Polarity suppression protein">
    <location>
        <begin position="1"/>
        <end position="190"/>
    </location>
</feature>
<feature type="sequence conflict" description="In Ref. 4; CAA26374." evidence="1" ref="4">
    <original>A</original>
    <variation>T</variation>
    <location>
        <position position="18"/>
    </location>
</feature>
<feature type="sequence conflict" description="In Ref. 1; AAA32432." evidence="1" ref="1">
    <original>F</original>
    <variation>S</variation>
    <location>
        <position position="169"/>
    </location>
</feature>
<feature type="helix" evidence="2">
    <location>
        <begin position="5"/>
        <end position="39"/>
    </location>
</feature>
<feature type="strand" evidence="3">
    <location>
        <begin position="40"/>
        <end position="42"/>
    </location>
</feature>
<feature type="helix" evidence="2">
    <location>
        <begin position="45"/>
        <end position="99"/>
    </location>
</feature>
<feature type="helix" evidence="2">
    <location>
        <begin position="101"/>
        <end position="104"/>
    </location>
</feature>
<feature type="helix" evidence="2">
    <location>
        <begin position="107"/>
        <end position="109"/>
    </location>
</feature>
<feature type="helix" evidence="2">
    <location>
        <begin position="112"/>
        <end position="134"/>
    </location>
</feature>
<feature type="turn" evidence="2">
    <location>
        <begin position="144"/>
        <end position="146"/>
    </location>
</feature>
<feature type="helix" evidence="2">
    <location>
        <begin position="147"/>
        <end position="153"/>
    </location>
</feature>
<feature type="helix" evidence="2">
    <location>
        <begin position="159"/>
        <end position="165"/>
    </location>
</feature>
<feature type="helix" evidence="2">
    <location>
        <begin position="171"/>
        <end position="186"/>
    </location>
</feature>
<organismHost>
    <name type="scientific">Escherichia coli</name>
    <dbReference type="NCBI Taxonomy" id="562"/>
</organismHost>
<keyword id="KW-0002">3D-structure</keyword>
<keyword id="KW-0426">Late protein</keyword>
<keyword id="KW-1185">Reference proteome</keyword>
<proteinExistence type="evidence at protein level"/>
<organism>
    <name type="scientific">Enterobacteria phage P4</name>
    <name type="common">Bacteriophage P4</name>
    <dbReference type="NCBI Taxonomy" id="10680"/>
    <lineage>
        <taxon>Viruses</taxon>
        <taxon>Duplodnaviria</taxon>
        <taxon>Heunggongvirae</taxon>
        <taxon>Uroviricota</taxon>
        <taxon>Caudoviricetes</taxon>
    </lineage>
</organism>
<reference key="1">
    <citation type="journal article" date="1986" name="J. Mol. Biol.">
        <title>Organization and expression of the satellite bacteriophage P4 late gene cluster.</title>
        <authorList>
            <person name="Dale E.C."/>
            <person name="Christie G.E."/>
            <person name="Calendar R."/>
        </authorList>
    </citation>
    <scope>NUCLEOTIDE SEQUENCE [GENOMIC DNA]</scope>
</reference>
<reference key="2">
    <citation type="journal article" date="1990" name="Nucleic Acids Res.">
        <title>DNA sequence of satellite bacteriophage P4.</title>
        <authorList>
            <person name="Halling C."/>
            <person name="Calendar R."/>
            <person name="Christie G.E."/>
            <person name="Dale E.C."/>
            <person name="Deho G."/>
            <person name="Finkel S."/>
            <person name="Flensburg J."/>
            <person name="Ghisotti D."/>
            <person name="Kahn M.L."/>
            <person name="Lane K.B."/>
            <person name="Lin C.-S."/>
            <person name="Lindqvist B.H."/>
            <person name="Pierson L.S."/>
            <person name="Six E.W."/>
            <person name="Sunshine M.G."/>
            <person name="Ziermann R."/>
        </authorList>
    </citation>
    <scope>NUCLEOTIDE SEQUENCE [LARGE SCALE GENOMIC DNA]</scope>
</reference>
<reference key="3">
    <citation type="submission" date="1994-01" db="EMBL/GenBank/DDBJ databases">
        <authorList>
            <person name="Halling C."/>
        </authorList>
    </citation>
    <scope>SEQUENCE REVISION TO 169</scope>
</reference>
<reference key="4">
    <citation type="journal article" date="1984" name="Nucleic Acids Res.">
        <title>Nucleotide sequence of the essential region of bacteriophage P4.</title>
        <authorList>
            <person name="Lin C.-S."/>
        </authorList>
    </citation>
    <scope>NUCLEOTIDE SEQUENCE [GENOMIC DNA] OF 1-61</scope>
</reference>
<reference key="5">
    <citation type="journal article" date="1990" name="J. Bacteriol.">
        <title>A mutation of the transactivation gene of satellite bacteriophage P4 that suppresses the rpoA109 mutation of Escherichia coli.</title>
        <authorList>
            <person name="Halling C."/>
            <person name="Sunshine M.G."/>
            <person name="Lane K.B."/>
            <person name="Six E.W."/>
            <person name="Calendar R."/>
        </authorList>
    </citation>
    <scope>NUCLEOTIDE SEQUENCE [GENOMIC DNA] OF 1-51</scope>
</reference>
<evidence type="ECO:0000305" key="1"/>
<evidence type="ECO:0007829" key="2">
    <source>
        <dbReference type="PDB" id="3RX6"/>
    </source>
</evidence>
<evidence type="ECO:0007829" key="3">
    <source>
        <dbReference type="PDB" id="4DVD"/>
    </source>
</evidence>
<accession>P05460</accession>
<accession>Q96207</accession>
<name>VPSU_BPP4</name>
<sequence length="190" mass="21366">MESTALQQAFDTCQNNKAAWLQRKNELAAAEQEYLRLLSGEGRNVSRLDELRNIIEVRKWQVNQAAGRYIRSHEAVQHISIRDRLNDFMQQHGTALAAALAPELMGYSELTAIARNCAIQRATDALREALLSWLAKGEKINYSAQDSDILTTIGFRPDVASVDDSREKFTPAQNMIFSRKSAQLASRQSV</sequence>
<gene>
    <name type="primary">psu</name>
</gene>
<comment type="function">
    <text>Late protein which functions to suppress polarity of amber mutations in the late genes of the P2 helper phage.</text>
</comment>
<protein>
    <recommendedName>
        <fullName>Polarity suppression protein</fullName>
    </recommendedName>
    <alternativeName>
        <fullName>Amber mutation-suppressing protein</fullName>
    </alternativeName>
</protein>